<dbReference type="EMBL" id="AJ938182">
    <property type="protein sequence ID" value="CAI81210.1"/>
    <property type="molecule type" value="Genomic_DNA"/>
</dbReference>
<dbReference type="RefSeq" id="WP_000403096.1">
    <property type="nucleotide sequence ID" value="NC_007622.1"/>
</dbReference>
<dbReference type="SMR" id="Q2YT78"/>
<dbReference type="KEGG" id="sab:SAB1521c"/>
<dbReference type="HOGENOM" id="CLU_073529_0_2_9"/>
<dbReference type="GO" id="GO:0046872">
    <property type="term" value="F:metal ion binding"/>
    <property type="evidence" value="ECO:0007669"/>
    <property type="project" value="UniProtKB-KW"/>
</dbReference>
<dbReference type="GO" id="GO:0008237">
    <property type="term" value="F:metallopeptidase activity"/>
    <property type="evidence" value="ECO:0007669"/>
    <property type="project" value="UniProtKB-KW"/>
</dbReference>
<dbReference type="GO" id="GO:0006508">
    <property type="term" value="P:proteolysis"/>
    <property type="evidence" value="ECO:0007669"/>
    <property type="project" value="UniProtKB-KW"/>
</dbReference>
<dbReference type="CDD" id="cd08071">
    <property type="entry name" value="MPN_DUF2466"/>
    <property type="match status" value="1"/>
</dbReference>
<dbReference type="Gene3D" id="3.40.140.10">
    <property type="entry name" value="Cytidine Deaminase, domain 2"/>
    <property type="match status" value="1"/>
</dbReference>
<dbReference type="InterPro" id="IPR037518">
    <property type="entry name" value="MPN"/>
</dbReference>
<dbReference type="InterPro" id="IPR025657">
    <property type="entry name" value="RadC_JAB"/>
</dbReference>
<dbReference type="InterPro" id="IPR010994">
    <property type="entry name" value="RuvA_2-like"/>
</dbReference>
<dbReference type="InterPro" id="IPR001405">
    <property type="entry name" value="UPF0758"/>
</dbReference>
<dbReference type="InterPro" id="IPR020891">
    <property type="entry name" value="UPF0758_CS"/>
</dbReference>
<dbReference type="InterPro" id="IPR046778">
    <property type="entry name" value="UPF0758_N"/>
</dbReference>
<dbReference type="NCBIfam" id="NF000642">
    <property type="entry name" value="PRK00024.1"/>
    <property type="match status" value="1"/>
</dbReference>
<dbReference type="NCBIfam" id="TIGR00608">
    <property type="entry name" value="radc"/>
    <property type="match status" value="1"/>
</dbReference>
<dbReference type="PANTHER" id="PTHR30471">
    <property type="entry name" value="DNA REPAIR PROTEIN RADC"/>
    <property type="match status" value="1"/>
</dbReference>
<dbReference type="PANTHER" id="PTHR30471:SF3">
    <property type="entry name" value="UPF0758 PROTEIN YEES-RELATED"/>
    <property type="match status" value="1"/>
</dbReference>
<dbReference type="Pfam" id="PF04002">
    <property type="entry name" value="RadC"/>
    <property type="match status" value="1"/>
</dbReference>
<dbReference type="Pfam" id="PF20582">
    <property type="entry name" value="UPF0758_N"/>
    <property type="match status" value="1"/>
</dbReference>
<dbReference type="SUPFAM" id="SSF102712">
    <property type="entry name" value="JAB1/MPN domain"/>
    <property type="match status" value="1"/>
</dbReference>
<dbReference type="SUPFAM" id="SSF47781">
    <property type="entry name" value="RuvA domain 2-like"/>
    <property type="match status" value="1"/>
</dbReference>
<dbReference type="PROSITE" id="PS50249">
    <property type="entry name" value="MPN"/>
    <property type="match status" value="1"/>
</dbReference>
<dbReference type="PROSITE" id="PS01302">
    <property type="entry name" value="UPF0758"/>
    <property type="match status" value="1"/>
</dbReference>
<comment type="similarity">
    <text evidence="2">Belongs to the UPF0758 family.</text>
</comment>
<organism>
    <name type="scientific">Staphylococcus aureus (strain bovine RF122 / ET3-1)</name>
    <dbReference type="NCBI Taxonomy" id="273036"/>
    <lineage>
        <taxon>Bacteria</taxon>
        <taxon>Bacillati</taxon>
        <taxon>Bacillota</taxon>
        <taxon>Bacilli</taxon>
        <taxon>Bacillales</taxon>
        <taxon>Staphylococcaceae</taxon>
        <taxon>Staphylococcus</taxon>
    </lineage>
</organism>
<reference key="1">
    <citation type="journal article" date="2007" name="PLoS ONE">
        <title>Molecular correlates of host specialization in Staphylococcus aureus.</title>
        <authorList>
            <person name="Herron-Olson L."/>
            <person name="Fitzgerald J.R."/>
            <person name="Musser J.M."/>
            <person name="Kapur V."/>
        </authorList>
    </citation>
    <scope>NUCLEOTIDE SEQUENCE [LARGE SCALE GENOMIC DNA]</scope>
    <source>
        <strain>bovine RF122 / ET3-1</strain>
    </source>
</reference>
<protein>
    <recommendedName>
        <fullName>UPF0758 protein SAB1521c</fullName>
    </recommendedName>
</protein>
<proteinExistence type="inferred from homology"/>
<feature type="chain" id="PRO_1000089849" description="UPF0758 protein SAB1521c">
    <location>
        <begin position="1"/>
        <end position="228"/>
    </location>
</feature>
<feature type="domain" description="MPN" evidence="1">
    <location>
        <begin position="102"/>
        <end position="224"/>
    </location>
</feature>
<feature type="short sequence motif" description="JAMM motif" evidence="1">
    <location>
        <begin position="173"/>
        <end position="186"/>
    </location>
</feature>
<feature type="binding site" evidence="1">
    <location>
        <position position="173"/>
    </location>
    <ligand>
        <name>Zn(2+)</name>
        <dbReference type="ChEBI" id="CHEBI:29105"/>
        <note>catalytic</note>
    </ligand>
</feature>
<feature type="binding site" evidence="1">
    <location>
        <position position="175"/>
    </location>
    <ligand>
        <name>Zn(2+)</name>
        <dbReference type="ChEBI" id="CHEBI:29105"/>
        <note>catalytic</note>
    </ligand>
</feature>
<feature type="binding site" evidence="1">
    <location>
        <position position="186"/>
    </location>
    <ligand>
        <name>Zn(2+)</name>
        <dbReference type="ChEBI" id="CHEBI:29105"/>
        <note>catalytic</note>
    </ligand>
</feature>
<keyword id="KW-0378">Hydrolase</keyword>
<keyword id="KW-0479">Metal-binding</keyword>
<keyword id="KW-0482">Metalloprotease</keyword>
<keyword id="KW-0645">Protease</keyword>
<keyword id="KW-0862">Zinc</keyword>
<name>Y1521_STAAB</name>
<evidence type="ECO:0000255" key="1">
    <source>
        <dbReference type="PROSITE-ProRule" id="PRU01182"/>
    </source>
</evidence>
<evidence type="ECO:0000305" key="2"/>
<sequence>MEIKEMVTSEMPRERLLSHGAKSLSNTELLAILINTGRKGFLSIDISNELLKSASNLNELKKSSINDLIQVKGIGLQKAITLKAAFELGERMGRRAENNRIKITQPSDVADYMIPTMKDLTQEHFVILLLNSKNVVIKESCVFKGTLNSSIVHPREIFSIAVRENANAIIAVHNHPSGDVTPSQEDIITTMRLKESGLILGIDLLDHIIIGDNRFTSLVEAGYFDEND</sequence>
<gene>
    <name type="ordered locus">SAB1521c</name>
</gene>
<accession>Q2YT78</accession>